<sequence length="564" mass="62885">MCYFCDFASLRVSYFIINFKFQLTQIIRFRTPSGMLRVNATPETAFNDLLNDLGNQMGESDLSSFTFSDKPNDKGSSANTFHGKSVADLGLKHGDMLYVTRTATSSSPAVTASVNEPKSGSAVVTKPINTAGIIPIHGPTKVKQLEVDDVLDTQDGMIKRKKSNLCRHGEKGMCEYCSPLPSWDKGYREENGIKHMSFHAYVNQINEQKNNRNNSTSYMSPLEEPDYNVNLNCPSGHAPYPKGICSKCQPPVITLQQQQFRMVDHVEFADSGILNDFIDVWRQTGVQRFGFMFGRYEVFDKVPLGIKAVVEAIYEPPQAGETDGITLLPWENQELVLKVAEKLNLYPVGIAFTDLTDSGARNGTVLCKRHKDTYFLSCLEVLMAARFQIEHPNITKHSNSGRFSSKFVTCVVSGGLEGEIEPRSFQVSTNAEALVRADIITGSTQPSMLYINSSQGKRYVPDVFYSKINEYGLEVKTNAKPAFPVDFLLVTLSDAFPLNPTPRFTNGFTIENRDFMGNLQDLRAAYRYINSDPGNGSCLSNFHFIVYLVTLGILGDSELQMVFD</sequence>
<accession>A5DBC9</accession>
<organism>
    <name type="scientific">Meyerozyma guilliermondii (strain ATCC 6260 / CBS 566 / DSM 6381 / JCM 1539 / NBRC 10279 / NRRL Y-324)</name>
    <name type="common">Yeast</name>
    <name type="synonym">Candida guilliermondii</name>
    <dbReference type="NCBI Taxonomy" id="294746"/>
    <lineage>
        <taxon>Eukaryota</taxon>
        <taxon>Fungi</taxon>
        <taxon>Dikarya</taxon>
        <taxon>Ascomycota</taxon>
        <taxon>Saccharomycotina</taxon>
        <taxon>Pichiomycetes</taxon>
        <taxon>Debaryomycetaceae</taxon>
        <taxon>Meyerozyma</taxon>
    </lineage>
</organism>
<keyword id="KW-0963">Cytoplasm</keyword>
<keyword id="KW-0256">Endoplasmic reticulum</keyword>
<keyword id="KW-0472">Membrane</keyword>
<keyword id="KW-0509">mRNA transport</keyword>
<keyword id="KW-0539">Nucleus</keyword>
<keyword id="KW-0653">Protein transport</keyword>
<keyword id="KW-1185">Reference proteome</keyword>
<keyword id="KW-0811">Translocation</keyword>
<keyword id="KW-0813">Transport</keyword>
<name>NPL4_PICGU</name>
<protein>
    <recommendedName>
        <fullName>Nuclear protein localization protein 4</fullName>
    </recommendedName>
</protein>
<feature type="chain" id="PRO_0000339451" description="Nuclear protein localization protein 4">
    <location>
        <begin position="1"/>
        <end position="564"/>
    </location>
</feature>
<feature type="domain" description="MPN" evidence="2">
    <location>
        <begin position="266"/>
        <end position="403"/>
    </location>
</feature>
<gene>
    <name type="primary">NPL4</name>
    <name type="ORF">PGUG_00584</name>
</gene>
<reference key="1">
    <citation type="journal article" date="2009" name="Nature">
        <title>Evolution of pathogenicity and sexual reproduction in eight Candida genomes.</title>
        <authorList>
            <person name="Butler G."/>
            <person name="Rasmussen M.D."/>
            <person name="Lin M.F."/>
            <person name="Santos M.A.S."/>
            <person name="Sakthikumar S."/>
            <person name="Munro C.A."/>
            <person name="Rheinbay E."/>
            <person name="Grabherr M."/>
            <person name="Forche A."/>
            <person name="Reedy J.L."/>
            <person name="Agrafioti I."/>
            <person name="Arnaud M.B."/>
            <person name="Bates S."/>
            <person name="Brown A.J.P."/>
            <person name="Brunke S."/>
            <person name="Costanzo M.C."/>
            <person name="Fitzpatrick D.A."/>
            <person name="de Groot P.W.J."/>
            <person name="Harris D."/>
            <person name="Hoyer L.L."/>
            <person name="Hube B."/>
            <person name="Klis F.M."/>
            <person name="Kodira C."/>
            <person name="Lennard N."/>
            <person name="Logue M.E."/>
            <person name="Martin R."/>
            <person name="Neiman A.M."/>
            <person name="Nikolaou E."/>
            <person name="Quail M.A."/>
            <person name="Quinn J."/>
            <person name="Santos M.C."/>
            <person name="Schmitzberger F.F."/>
            <person name="Sherlock G."/>
            <person name="Shah P."/>
            <person name="Silverstein K.A.T."/>
            <person name="Skrzypek M.S."/>
            <person name="Soll D."/>
            <person name="Staggs R."/>
            <person name="Stansfield I."/>
            <person name="Stumpf M.P.H."/>
            <person name="Sudbery P.E."/>
            <person name="Srikantha T."/>
            <person name="Zeng Q."/>
            <person name="Berman J."/>
            <person name="Berriman M."/>
            <person name="Heitman J."/>
            <person name="Gow N.A.R."/>
            <person name="Lorenz M.C."/>
            <person name="Birren B.W."/>
            <person name="Kellis M."/>
            <person name="Cuomo C.A."/>
        </authorList>
    </citation>
    <scope>NUCLEOTIDE SEQUENCE [LARGE SCALE GENOMIC DNA]</scope>
    <source>
        <strain>ATCC 6260 / CBS 566 / DSM 6381 / JCM 1539 / NBRC 10279 / NRRL Y-324</strain>
    </source>
</reference>
<dbReference type="EMBL" id="CH408155">
    <property type="protein sequence ID" value="EDK36486.2"/>
    <property type="molecule type" value="Genomic_DNA"/>
</dbReference>
<dbReference type="RefSeq" id="XP_001487207.1">
    <property type="nucleotide sequence ID" value="XM_001487157.1"/>
</dbReference>
<dbReference type="SMR" id="A5DBC9"/>
<dbReference type="FunCoup" id="A5DBC9">
    <property type="interactions" value="935"/>
</dbReference>
<dbReference type="STRING" id="294746.A5DBC9"/>
<dbReference type="GeneID" id="5128788"/>
<dbReference type="KEGG" id="pgu:PGUG_00584"/>
<dbReference type="VEuPathDB" id="FungiDB:PGUG_00584"/>
<dbReference type="eggNOG" id="KOG2834">
    <property type="taxonomic scope" value="Eukaryota"/>
</dbReference>
<dbReference type="HOGENOM" id="CLU_017172_0_0_1"/>
<dbReference type="InParanoid" id="A5DBC9"/>
<dbReference type="OMA" id="TKDRYVP"/>
<dbReference type="OrthoDB" id="10251089at2759"/>
<dbReference type="Proteomes" id="UP000001997">
    <property type="component" value="Unassembled WGS sequence"/>
</dbReference>
<dbReference type="GO" id="GO:0036266">
    <property type="term" value="C:Cdc48p-Npl4p-Vms1p AAA ATPase complex"/>
    <property type="evidence" value="ECO:0007669"/>
    <property type="project" value="EnsemblFungi"/>
</dbReference>
<dbReference type="GO" id="GO:0000837">
    <property type="term" value="C:Doa10p ubiquitin ligase complex"/>
    <property type="evidence" value="ECO:0007669"/>
    <property type="project" value="EnsemblFungi"/>
</dbReference>
<dbReference type="GO" id="GO:0000839">
    <property type="term" value="C:Hrd1p ubiquitin ligase ERAD-L complex"/>
    <property type="evidence" value="ECO:0007669"/>
    <property type="project" value="EnsemblFungi"/>
</dbReference>
<dbReference type="GO" id="GO:0031965">
    <property type="term" value="C:nuclear membrane"/>
    <property type="evidence" value="ECO:0007669"/>
    <property type="project" value="UniProtKB-SubCell"/>
</dbReference>
<dbReference type="GO" id="GO:0048471">
    <property type="term" value="C:perinuclear region of cytoplasm"/>
    <property type="evidence" value="ECO:0007669"/>
    <property type="project" value="UniProtKB-SubCell"/>
</dbReference>
<dbReference type="GO" id="GO:0030894">
    <property type="term" value="C:replisome"/>
    <property type="evidence" value="ECO:0007669"/>
    <property type="project" value="EnsemblFungi"/>
</dbReference>
<dbReference type="GO" id="GO:1990112">
    <property type="term" value="C:RQC complex"/>
    <property type="evidence" value="ECO:0007669"/>
    <property type="project" value="EnsemblFungi"/>
</dbReference>
<dbReference type="GO" id="GO:0034098">
    <property type="term" value="C:VCP-NPL4-UFD1 AAA ATPase complex"/>
    <property type="evidence" value="ECO:0007669"/>
    <property type="project" value="EnsemblFungi"/>
</dbReference>
<dbReference type="GO" id="GO:0036435">
    <property type="term" value="F:K48-linked polyubiquitin modification-dependent protein binding"/>
    <property type="evidence" value="ECO:0007669"/>
    <property type="project" value="EnsemblFungi"/>
</dbReference>
<dbReference type="GO" id="GO:0043130">
    <property type="term" value="F:ubiquitin binding"/>
    <property type="evidence" value="ECO:0007669"/>
    <property type="project" value="TreeGrafter"/>
</dbReference>
<dbReference type="GO" id="GO:0031625">
    <property type="term" value="F:ubiquitin protein ligase binding"/>
    <property type="evidence" value="ECO:0007669"/>
    <property type="project" value="TreeGrafter"/>
</dbReference>
<dbReference type="GO" id="GO:0071629">
    <property type="term" value="P:cytoplasm protein quality control by the ubiquitin-proteasome system"/>
    <property type="evidence" value="ECO:0007669"/>
    <property type="project" value="EnsemblFungi"/>
</dbReference>
<dbReference type="GO" id="GO:0006274">
    <property type="term" value="P:DNA replication termination"/>
    <property type="evidence" value="ECO:0007669"/>
    <property type="project" value="EnsemblFungi"/>
</dbReference>
<dbReference type="GO" id="GO:0099638">
    <property type="term" value="P:endosome to plasma membrane protein transport"/>
    <property type="evidence" value="ECO:0007669"/>
    <property type="project" value="EnsemblFungi"/>
</dbReference>
<dbReference type="GO" id="GO:0072671">
    <property type="term" value="P:mitochondria-associated ubiquitin-dependent protein catabolic process"/>
    <property type="evidence" value="ECO:0007669"/>
    <property type="project" value="EnsemblFungi"/>
</dbReference>
<dbReference type="GO" id="GO:0051228">
    <property type="term" value="P:mitotic spindle disassembly"/>
    <property type="evidence" value="ECO:0007669"/>
    <property type="project" value="EnsemblFungi"/>
</dbReference>
<dbReference type="GO" id="GO:0051028">
    <property type="term" value="P:mRNA transport"/>
    <property type="evidence" value="ECO:0007669"/>
    <property type="project" value="UniProtKB-KW"/>
</dbReference>
<dbReference type="GO" id="GO:0070651">
    <property type="term" value="P:nonfunctional rRNA decay"/>
    <property type="evidence" value="ECO:0007669"/>
    <property type="project" value="EnsemblFungi"/>
</dbReference>
<dbReference type="GO" id="GO:1900182">
    <property type="term" value="P:positive regulation of protein localization to nucleus"/>
    <property type="evidence" value="ECO:0007669"/>
    <property type="project" value="EnsemblFungi"/>
</dbReference>
<dbReference type="GO" id="GO:0072665">
    <property type="term" value="P:protein localization to vacuole"/>
    <property type="evidence" value="ECO:0007669"/>
    <property type="project" value="EnsemblFungi"/>
</dbReference>
<dbReference type="GO" id="GO:0030970">
    <property type="term" value="P:retrograde protein transport, ER to cytosol"/>
    <property type="evidence" value="ECO:0007669"/>
    <property type="project" value="EnsemblFungi"/>
</dbReference>
<dbReference type="GO" id="GO:1990116">
    <property type="term" value="P:ribosome-associated ubiquitin-dependent protein catabolic process"/>
    <property type="evidence" value="ECO:0007669"/>
    <property type="project" value="EnsemblFungi"/>
</dbReference>
<dbReference type="CDD" id="cd08061">
    <property type="entry name" value="MPN_NPL4"/>
    <property type="match status" value="1"/>
</dbReference>
<dbReference type="Gene3D" id="3.10.20.90">
    <property type="entry name" value="Phosphatidylinositol 3-kinase Catalytic Subunit, Chain A, domain 1"/>
    <property type="match status" value="1"/>
</dbReference>
<dbReference type="InterPro" id="IPR037518">
    <property type="entry name" value="MPN"/>
</dbReference>
<dbReference type="InterPro" id="IPR016563">
    <property type="entry name" value="Npl4"/>
</dbReference>
<dbReference type="InterPro" id="IPR007717">
    <property type="entry name" value="NPL4_C"/>
</dbReference>
<dbReference type="InterPro" id="IPR024682">
    <property type="entry name" value="Npl4_Ub-like_dom"/>
</dbReference>
<dbReference type="InterPro" id="IPR007716">
    <property type="entry name" value="NPL4_Zn-bd_put"/>
</dbReference>
<dbReference type="InterPro" id="IPR029071">
    <property type="entry name" value="Ubiquitin-like_domsf"/>
</dbReference>
<dbReference type="PANTHER" id="PTHR12710">
    <property type="entry name" value="NUCLEAR PROTEIN LOCALIZATION 4"/>
    <property type="match status" value="1"/>
</dbReference>
<dbReference type="PANTHER" id="PTHR12710:SF0">
    <property type="entry name" value="NUCLEAR PROTEIN LOCALIZATION PROTEIN 4 HOMOLOG"/>
    <property type="match status" value="1"/>
</dbReference>
<dbReference type="Pfam" id="PF05021">
    <property type="entry name" value="NPL4"/>
    <property type="match status" value="1"/>
</dbReference>
<dbReference type="Pfam" id="PF11543">
    <property type="entry name" value="UN_NPL4"/>
    <property type="match status" value="1"/>
</dbReference>
<dbReference type="Pfam" id="PF05020">
    <property type="entry name" value="zf-NPL4"/>
    <property type="match status" value="1"/>
</dbReference>
<dbReference type="PIRSF" id="PIRSF010052">
    <property type="entry name" value="Polyub_prc_Npl4"/>
    <property type="match status" value="1"/>
</dbReference>
<dbReference type="SUPFAM" id="SSF54236">
    <property type="entry name" value="Ubiquitin-like"/>
    <property type="match status" value="1"/>
</dbReference>
<dbReference type="PROSITE" id="PS50249">
    <property type="entry name" value="MPN"/>
    <property type="match status" value="1"/>
</dbReference>
<proteinExistence type="inferred from homology"/>
<evidence type="ECO:0000250" key="1"/>
<evidence type="ECO:0000255" key="2">
    <source>
        <dbReference type="PROSITE-ProRule" id="PRU01182"/>
    </source>
</evidence>
<evidence type="ECO:0000305" key="3"/>
<comment type="function">
    <text evidence="1">Involved in the import of nuclear-targeted proteins into the nucleus and the export of poly(A) RNA out of the nucleus. Has a role in the endoplasmic reticulum-associated degradation (ERAD) pathway (By similarity).</text>
</comment>
<comment type="subcellular location">
    <subcellularLocation>
        <location evidence="1">Cytoplasm</location>
        <location evidence="1">Perinuclear region</location>
    </subcellularLocation>
    <subcellularLocation>
        <location evidence="1">Endoplasmic reticulum membrane</location>
        <topology evidence="1">Peripheral membrane protein</topology>
        <orientation evidence="1">Cytoplasmic side</orientation>
    </subcellularLocation>
    <subcellularLocation>
        <location evidence="1">Nucleus membrane</location>
        <topology evidence="1">Peripheral membrane protein</topology>
        <orientation evidence="1">Cytoplasmic side</orientation>
    </subcellularLocation>
    <text evidence="1">Localizes mainly at the nuclear periphery and the endoplasmic reticulum membrane.</text>
</comment>
<comment type="similarity">
    <text evidence="3">Belongs to the NPL4 family.</text>
</comment>